<gene>
    <name type="ORF">SJAG_03553</name>
</gene>
<organism>
    <name type="scientific">Schizosaccharomyces japonicus (strain yFS275 / FY16936)</name>
    <name type="common">Fission yeast</name>
    <dbReference type="NCBI Taxonomy" id="402676"/>
    <lineage>
        <taxon>Eukaryota</taxon>
        <taxon>Fungi</taxon>
        <taxon>Dikarya</taxon>
        <taxon>Ascomycota</taxon>
        <taxon>Taphrinomycotina</taxon>
        <taxon>Schizosaccharomycetes</taxon>
        <taxon>Schizosaccharomycetales</taxon>
        <taxon>Schizosaccharomycetaceae</taxon>
        <taxon>Schizosaccharomyces</taxon>
    </lineage>
</organism>
<sequence length="377" mass="42163">MFRRGGRILNRRIFGAGISAFRVQGRKCASDLSKALASGPKFSDFLKGDKEEQLKPEEAYELEENVVLPNGSVHKRLPSWLKTKVPLGTNFNKIKNDLRGLNLHTVCEEARCPNMGECWGGKDKTRATATIMLMGDTCTRGCRFCSIKTSRKPPPLDPNEPEKTAEAIKRWGLGYVVLTSVDRDDLADAGASHIAKTISLIKSKAPQVLVEALTPDFSGNLDLVSHVAKSGLDVFAHNVETVEELTPFVRDRRANFRQSLRVLKHAKSVSPHLITKTSIMLGLGETDEEIEATLGELRKNEVDVVTFGQYMRPTKRHMKVQAYITPDKFEHWRKRAEELGFLYVASGPLVRSSYKAGEFYLTNILRRRTAAKAQADH</sequence>
<accession>B6K4J2</accession>
<protein>
    <recommendedName>
        <fullName evidence="1">Lipoyl synthase, mitochondrial</fullName>
        <ecNumber evidence="1">2.8.1.8</ecNumber>
    </recommendedName>
    <alternativeName>
        <fullName evidence="1">Lipoate synthase</fullName>
        <shortName evidence="1">LS</shortName>
        <shortName evidence="1">Lip-syn</shortName>
    </alternativeName>
    <alternativeName>
        <fullName evidence="1">Lipoic acid synthase</fullName>
    </alternativeName>
</protein>
<proteinExistence type="inferred from homology"/>
<name>LIPA_SCHJY</name>
<dbReference type="EC" id="2.8.1.8" evidence="1"/>
<dbReference type="EMBL" id="KE651167">
    <property type="protein sequence ID" value="EEB08399.1"/>
    <property type="molecule type" value="Genomic_DNA"/>
</dbReference>
<dbReference type="RefSeq" id="XP_002174692.2">
    <property type="nucleotide sequence ID" value="XM_002174656.2"/>
</dbReference>
<dbReference type="SMR" id="B6K4J2"/>
<dbReference type="STRING" id="402676.B6K4J2"/>
<dbReference type="GeneID" id="7048812"/>
<dbReference type="JaponicusDB" id="SJAG_03553">
    <property type="gene designation" value="lip5"/>
</dbReference>
<dbReference type="eggNOG" id="KOG2672">
    <property type="taxonomic scope" value="Eukaryota"/>
</dbReference>
<dbReference type="OrthoDB" id="3231at2759"/>
<dbReference type="UniPathway" id="UPA00538">
    <property type="reaction ID" value="UER00593"/>
</dbReference>
<dbReference type="Proteomes" id="UP000001744">
    <property type="component" value="Unassembled WGS sequence"/>
</dbReference>
<dbReference type="GO" id="GO:0005739">
    <property type="term" value="C:mitochondrion"/>
    <property type="evidence" value="ECO:0000318"/>
    <property type="project" value="GO_Central"/>
</dbReference>
<dbReference type="GO" id="GO:0051539">
    <property type="term" value="F:4 iron, 4 sulfur cluster binding"/>
    <property type="evidence" value="ECO:0007669"/>
    <property type="project" value="UniProtKB-UniRule"/>
</dbReference>
<dbReference type="GO" id="GO:0016992">
    <property type="term" value="F:lipoate synthase activity"/>
    <property type="evidence" value="ECO:0000318"/>
    <property type="project" value="GO_Central"/>
</dbReference>
<dbReference type="GO" id="GO:0046872">
    <property type="term" value="F:metal ion binding"/>
    <property type="evidence" value="ECO:0007669"/>
    <property type="project" value="UniProtKB-KW"/>
</dbReference>
<dbReference type="GO" id="GO:0009107">
    <property type="term" value="P:lipoate biosynthetic process"/>
    <property type="evidence" value="ECO:0000318"/>
    <property type="project" value="GO_Central"/>
</dbReference>
<dbReference type="CDD" id="cd01335">
    <property type="entry name" value="Radical_SAM"/>
    <property type="match status" value="1"/>
</dbReference>
<dbReference type="FunFam" id="3.20.20.70:FF:000036">
    <property type="entry name" value="Lipoyl synthase, mitochondrial"/>
    <property type="match status" value="1"/>
</dbReference>
<dbReference type="Gene3D" id="3.20.20.70">
    <property type="entry name" value="Aldolase class I"/>
    <property type="match status" value="1"/>
</dbReference>
<dbReference type="HAMAP" id="MF_00206">
    <property type="entry name" value="Lipoyl_synth"/>
    <property type="match status" value="1"/>
</dbReference>
<dbReference type="InterPro" id="IPR013785">
    <property type="entry name" value="Aldolase_TIM"/>
</dbReference>
<dbReference type="InterPro" id="IPR006638">
    <property type="entry name" value="Elp3/MiaA/NifB-like_rSAM"/>
</dbReference>
<dbReference type="InterPro" id="IPR031691">
    <property type="entry name" value="LIAS_N"/>
</dbReference>
<dbReference type="InterPro" id="IPR003698">
    <property type="entry name" value="Lipoyl_synth"/>
</dbReference>
<dbReference type="InterPro" id="IPR007197">
    <property type="entry name" value="rSAM"/>
</dbReference>
<dbReference type="NCBIfam" id="TIGR00510">
    <property type="entry name" value="lipA"/>
    <property type="match status" value="1"/>
</dbReference>
<dbReference type="NCBIfam" id="NF004019">
    <property type="entry name" value="PRK05481.1"/>
    <property type="match status" value="1"/>
</dbReference>
<dbReference type="NCBIfam" id="NF009544">
    <property type="entry name" value="PRK12928.1"/>
    <property type="match status" value="1"/>
</dbReference>
<dbReference type="PANTHER" id="PTHR10949">
    <property type="entry name" value="LIPOYL SYNTHASE"/>
    <property type="match status" value="1"/>
</dbReference>
<dbReference type="PANTHER" id="PTHR10949:SF0">
    <property type="entry name" value="LIPOYL SYNTHASE, MITOCHONDRIAL"/>
    <property type="match status" value="1"/>
</dbReference>
<dbReference type="Pfam" id="PF16881">
    <property type="entry name" value="LIAS_N"/>
    <property type="match status" value="1"/>
</dbReference>
<dbReference type="Pfam" id="PF04055">
    <property type="entry name" value="Radical_SAM"/>
    <property type="match status" value="1"/>
</dbReference>
<dbReference type="PIRSF" id="PIRSF005963">
    <property type="entry name" value="Lipoyl_synth"/>
    <property type="match status" value="1"/>
</dbReference>
<dbReference type="SFLD" id="SFLDF00271">
    <property type="entry name" value="lipoyl_synthase"/>
    <property type="match status" value="1"/>
</dbReference>
<dbReference type="SFLD" id="SFLDS00029">
    <property type="entry name" value="Radical_SAM"/>
    <property type="match status" value="1"/>
</dbReference>
<dbReference type="SMART" id="SM00729">
    <property type="entry name" value="Elp3"/>
    <property type="match status" value="1"/>
</dbReference>
<dbReference type="SUPFAM" id="SSF102114">
    <property type="entry name" value="Radical SAM enzymes"/>
    <property type="match status" value="1"/>
</dbReference>
<dbReference type="PROSITE" id="PS51918">
    <property type="entry name" value="RADICAL_SAM"/>
    <property type="match status" value="1"/>
</dbReference>
<keyword id="KW-0004">4Fe-4S</keyword>
<keyword id="KW-0408">Iron</keyword>
<keyword id="KW-0411">Iron-sulfur</keyword>
<keyword id="KW-0479">Metal-binding</keyword>
<keyword id="KW-0496">Mitochondrion</keyword>
<keyword id="KW-1185">Reference proteome</keyword>
<keyword id="KW-0949">S-adenosyl-L-methionine</keyword>
<keyword id="KW-0808">Transferase</keyword>
<keyword id="KW-0809">Transit peptide</keyword>
<feature type="transit peptide" description="Mitochondrion" evidence="1">
    <location>
        <begin position="1"/>
        <end position="77"/>
    </location>
</feature>
<feature type="chain" id="PRO_0000398291" description="Lipoyl synthase, mitochondrial">
    <location>
        <begin position="78"/>
        <end position="377"/>
    </location>
</feature>
<feature type="domain" description="Radical SAM core" evidence="2">
    <location>
        <begin position="123"/>
        <end position="342"/>
    </location>
</feature>
<feature type="binding site" evidence="1">
    <location>
        <position position="107"/>
    </location>
    <ligand>
        <name>[4Fe-4S] cluster</name>
        <dbReference type="ChEBI" id="CHEBI:49883"/>
        <label>1</label>
    </ligand>
</feature>
<feature type="binding site" evidence="1">
    <location>
        <position position="112"/>
    </location>
    <ligand>
        <name>[4Fe-4S] cluster</name>
        <dbReference type="ChEBI" id="CHEBI:49883"/>
        <label>1</label>
    </ligand>
</feature>
<feature type="binding site" evidence="1">
    <location>
        <position position="118"/>
    </location>
    <ligand>
        <name>[4Fe-4S] cluster</name>
        <dbReference type="ChEBI" id="CHEBI:49883"/>
        <label>1</label>
    </ligand>
</feature>
<feature type="binding site" evidence="1">
    <location>
        <position position="138"/>
    </location>
    <ligand>
        <name>[4Fe-4S] cluster</name>
        <dbReference type="ChEBI" id="CHEBI:49883"/>
        <label>2</label>
        <note>4Fe-4S-S-AdoMet</note>
    </ligand>
</feature>
<feature type="binding site" evidence="1">
    <location>
        <position position="142"/>
    </location>
    <ligand>
        <name>[4Fe-4S] cluster</name>
        <dbReference type="ChEBI" id="CHEBI:49883"/>
        <label>2</label>
        <note>4Fe-4S-S-AdoMet</note>
    </ligand>
</feature>
<feature type="binding site" evidence="1">
    <location>
        <position position="145"/>
    </location>
    <ligand>
        <name>[4Fe-4S] cluster</name>
        <dbReference type="ChEBI" id="CHEBI:49883"/>
        <label>2</label>
        <note>4Fe-4S-S-AdoMet</note>
    </ligand>
</feature>
<feature type="binding site" evidence="1">
    <location>
        <position position="353"/>
    </location>
    <ligand>
        <name>[4Fe-4S] cluster</name>
        <dbReference type="ChEBI" id="CHEBI:49883"/>
        <label>1</label>
    </ligand>
</feature>
<reference key="1">
    <citation type="journal article" date="2011" name="Science">
        <title>Comparative functional genomics of the fission yeasts.</title>
        <authorList>
            <person name="Rhind N."/>
            <person name="Chen Z."/>
            <person name="Yassour M."/>
            <person name="Thompson D.A."/>
            <person name="Haas B.J."/>
            <person name="Habib N."/>
            <person name="Wapinski I."/>
            <person name="Roy S."/>
            <person name="Lin M.F."/>
            <person name="Heiman D.I."/>
            <person name="Young S.K."/>
            <person name="Furuya K."/>
            <person name="Guo Y."/>
            <person name="Pidoux A."/>
            <person name="Chen H.M."/>
            <person name="Robbertse B."/>
            <person name="Goldberg J.M."/>
            <person name="Aoki K."/>
            <person name="Bayne E.H."/>
            <person name="Berlin A.M."/>
            <person name="Desjardins C.A."/>
            <person name="Dobbs E."/>
            <person name="Dukaj L."/>
            <person name="Fan L."/>
            <person name="FitzGerald M.G."/>
            <person name="French C."/>
            <person name="Gujja S."/>
            <person name="Hansen K."/>
            <person name="Keifenheim D."/>
            <person name="Levin J.Z."/>
            <person name="Mosher R.A."/>
            <person name="Mueller C.A."/>
            <person name="Pfiffner J."/>
            <person name="Priest M."/>
            <person name="Russ C."/>
            <person name="Smialowska A."/>
            <person name="Swoboda P."/>
            <person name="Sykes S.M."/>
            <person name="Vaughn M."/>
            <person name="Vengrova S."/>
            <person name="Yoder R."/>
            <person name="Zeng Q."/>
            <person name="Allshire R."/>
            <person name="Baulcombe D."/>
            <person name="Birren B.W."/>
            <person name="Brown W."/>
            <person name="Ekwall K."/>
            <person name="Kellis M."/>
            <person name="Leatherwood J."/>
            <person name="Levin H."/>
            <person name="Margalit H."/>
            <person name="Martienssen R."/>
            <person name="Nieduszynski C.A."/>
            <person name="Spatafora J.W."/>
            <person name="Friedman N."/>
            <person name="Dalgaard J.Z."/>
            <person name="Baumann P."/>
            <person name="Niki H."/>
            <person name="Regev A."/>
            <person name="Nusbaum C."/>
        </authorList>
    </citation>
    <scope>NUCLEOTIDE SEQUENCE [LARGE SCALE GENOMIC DNA]</scope>
    <source>
        <strain>yFS275 / FY16936</strain>
    </source>
</reference>
<evidence type="ECO:0000255" key="1">
    <source>
        <dbReference type="HAMAP-Rule" id="MF_03123"/>
    </source>
</evidence>
<evidence type="ECO:0000255" key="2">
    <source>
        <dbReference type="PROSITE-ProRule" id="PRU01266"/>
    </source>
</evidence>
<comment type="function">
    <text evidence="1">Catalyzes the radical-mediated insertion of two sulfur atoms into the C-6 and C-8 positions of the octanoyl moiety bound to the lipoyl domains of lipoate-dependent enzymes, thereby converting the octanoylated domains into lipoylated derivatives.</text>
</comment>
<comment type="catalytic activity">
    <reaction evidence="1">
        <text>[[Fe-S] cluster scaffold protein carrying a second [4Fe-4S](2+) cluster] + N(6)-octanoyl-L-lysyl-[protein] + 2 oxidized [2Fe-2S]-[ferredoxin] + 2 S-adenosyl-L-methionine + 4 H(+) = [[Fe-S] cluster scaffold protein] + N(6)-[(R)-dihydrolipoyl]-L-lysyl-[protein] + 4 Fe(3+) + 2 hydrogen sulfide + 2 5'-deoxyadenosine + 2 L-methionine + 2 reduced [2Fe-2S]-[ferredoxin]</text>
        <dbReference type="Rhea" id="RHEA:16585"/>
        <dbReference type="Rhea" id="RHEA-COMP:9928"/>
        <dbReference type="Rhea" id="RHEA-COMP:10000"/>
        <dbReference type="Rhea" id="RHEA-COMP:10001"/>
        <dbReference type="Rhea" id="RHEA-COMP:10475"/>
        <dbReference type="Rhea" id="RHEA-COMP:14568"/>
        <dbReference type="Rhea" id="RHEA-COMP:14569"/>
        <dbReference type="ChEBI" id="CHEBI:15378"/>
        <dbReference type="ChEBI" id="CHEBI:17319"/>
        <dbReference type="ChEBI" id="CHEBI:29034"/>
        <dbReference type="ChEBI" id="CHEBI:29919"/>
        <dbReference type="ChEBI" id="CHEBI:33722"/>
        <dbReference type="ChEBI" id="CHEBI:33737"/>
        <dbReference type="ChEBI" id="CHEBI:33738"/>
        <dbReference type="ChEBI" id="CHEBI:57844"/>
        <dbReference type="ChEBI" id="CHEBI:59789"/>
        <dbReference type="ChEBI" id="CHEBI:78809"/>
        <dbReference type="ChEBI" id="CHEBI:83100"/>
        <dbReference type="EC" id="2.8.1.8"/>
    </reaction>
</comment>
<comment type="cofactor">
    <cofactor evidence="1">
        <name>[4Fe-4S] cluster</name>
        <dbReference type="ChEBI" id="CHEBI:49883"/>
    </cofactor>
    <text evidence="1">Binds 2 [4Fe-4S] clusters per subunit. One cluster is coordinated with 3 cysteines and an exchangeable S-adenosyl-L-methionine.</text>
</comment>
<comment type="pathway">
    <text evidence="1">Protein modification; protein lipoylation via endogenous pathway; protein N(6)-(lipoyl)lysine from octanoyl-[acyl-carrier-protein]: step 2/2.</text>
</comment>
<comment type="subcellular location">
    <subcellularLocation>
        <location evidence="1">Mitochondrion</location>
    </subcellularLocation>
</comment>
<comment type="similarity">
    <text evidence="1">Belongs to the radical SAM superfamily. Lipoyl synthase family.</text>
</comment>